<reference key="1">
    <citation type="journal article" date="1996" name="Braz. J. Med. Biol. Res.">
        <title>Cloning and sequencing of the nitrogenase structural genes nifHDK of Herbaspirillum seropedicae.</title>
        <authorList>
            <person name="Machado I.M.P."/>
            <person name="Yates M.G."/>
            <person name="Machado H.B."/>
            <person name="Souza E.M."/>
            <person name="Pedrosa F.O."/>
        </authorList>
    </citation>
    <scope>NUCLEOTIDE SEQUENCE [GENOMIC DNA]</scope>
    <source>
        <strain>ATCC 35893 / DSM 6446 / LMG 6514 / Z78</strain>
    </source>
</reference>
<name>NIFD_HERSE</name>
<evidence type="ECO:0000250" key="1"/>
<evidence type="ECO:0000305" key="2"/>
<keyword id="KW-0067">ATP-binding</keyword>
<keyword id="KW-0408">Iron</keyword>
<keyword id="KW-0411">Iron-sulfur</keyword>
<keyword id="KW-0479">Metal-binding</keyword>
<keyword id="KW-0500">Molybdenum</keyword>
<keyword id="KW-0535">Nitrogen fixation</keyword>
<keyword id="KW-0547">Nucleotide-binding</keyword>
<keyword id="KW-0560">Oxidoreductase</keyword>
<accession>P77874</accession>
<protein>
    <recommendedName>
        <fullName>Nitrogenase molybdenum-iron protein alpha chain</fullName>
        <ecNumber>1.18.6.1</ecNumber>
    </recommendedName>
    <alternativeName>
        <fullName>Dinitrogenase</fullName>
    </alternativeName>
    <alternativeName>
        <fullName>Nitrogenase component I</fullName>
    </alternativeName>
</protein>
<gene>
    <name type="primary">nifD</name>
</gene>
<organism>
    <name type="scientific">Herbaspirillum seropedicae</name>
    <dbReference type="NCBI Taxonomy" id="964"/>
    <lineage>
        <taxon>Bacteria</taxon>
        <taxon>Pseudomonadati</taxon>
        <taxon>Pseudomonadota</taxon>
        <taxon>Betaproteobacteria</taxon>
        <taxon>Burkholderiales</taxon>
        <taxon>Oxalobacteraceae</taxon>
        <taxon>Herbaspirillum</taxon>
    </lineage>
</organism>
<proteinExistence type="inferred from homology"/>
<dbReference type="EC" id="1.18.6.1"/>
<dbReference type="EMBL" id="Z54207">
    <property type="protein sequence ID" value="CAA90933.1"/>
    <property type="molecule type" value="Genomic_DNA"/>
</dbReference>
<dbReference type="SMR" id="P77874"/>
<dbReference type="GO" id="GO:0016612">
    <property type="term" value="C:molybdenum-iron nitrogenase complex"/>
    <property type="evidence" value="ECO:0007669"/>
    <property type="project" value="InterPro"/>
</dbReference>
<dbReference type="GO" id="GO:0005524">
    <property type="term" value="F:ATP binding"/>
    <property type="evidence" value="ECO:0007669"/>
    <property type="project" value="UniProtKB-KW"/>
</dbReference>
<dbReference type="GO" id="GO:0051536">
    <property type="term" value="F:iron-sulfur cluster binding"/>
    <property type="evidence" value="ECO:0007669"/>
    <property type="project" value="UniProtKB-KW"/>
</dbReference>
<dbReference type="GO" id="GO:0046872">
    <property type="term" value="F:metal ion binding"/>
    <property type="evidence" value="ECO:0007669"/>
    <property type="project" value="UniProtKB-KW"/>
</dbReference>
<dbReference type="GO" id="GO:0016163">
    <property type="term" value="F:nitrogenase activity"/>
    <property type="evidence" value="ECO:0007669"/>
    <property type="project" value="UniProtKB-EC"/>
</dbReference>
<dbReference type="GO" id="GO:0009399">
    <property type="term" value="P:nitrogen fixation"/>
    <property type="evidence" value="ECO:0007669"/>
    <property type="project" value="UniProtKB-KW"/>
</dbReference>
<dbReference type="CDD" id="cd01976">
    <property type="entry name" value="Nitrogenase_MoFe_alpha"/>
    <property type="match status" value="1"/>
</dbReference>
<dbReference type="Gene3D" id="3.40.50.1980">
    <property type="entry name" value="Nitrogenase molybdenum iron protein domain"/>
    <property type="match status" value="3"/>
</dbReference>
<dbReference type="InterPro" id="IPR000510">
    <property type="entry name" value="Nase/OxRdtase_comp1"/>
</dbReference>
<dbReference type="InterPro" id="IPR010143">
    <property type="entry name" value="Nase_comp1_asu"/>
</dbReference>
<dbReference type="InterPro" id="IPR000318">
    <property type="entry name" value="Nase_comp1_CS"/>
</dbReference>
<dbReference type="InterPro" id="IPR005972">
    <property type="entry name" value="Nase_Mo-Fe_asu"/>
</dbReference>
<dbReference type="NCBIfam" id="TIGR01862">
    <property type="entry name" value="N2-ase-Ialpha"/>
    <property type="match status" value="1"/>
</dbReference>
<dbReference type="NCBIfam" id="TIGR01282">
    <property type="entry name" value="nifD"/>
    <property type="match status" value="1"/>
</dbReference>
<dbReference type="PANTHER" id="PTHR43457">
    <property type="entry name" value="NITROGENASE MOLYBDENUM-IRON PROTEIN ALPHA CHAIN"/>
    <property type="match status" value="1"/>
</dbReference>
<dbReference type="PANTHER" id="PTHR43457:SF1">
    <property type="entry name" value="NITROGENASE MOLYBDENUM-IRON PROTEIN ALPHA CHAIN"/>
    <property type="match status" value="1"/>
</dbReference>
<dbReference type="Pfam" id="PF00148">
    <property type="entry name" value="Oxidored_nitro"/>
    <property type="match status" value="1"/>
</dbReference>
<dbReference type="SUPFAM" id="SSF53807">
    <property type="entry name" value="Helical backbone' metal receptor"/>
    <property type="match status" value="1"/>
</dbReference>
<dbReference type="PROSITE" id="PS00699">
    <property type="entry name" value="NITROGENASE_1_1"/>
    <property type="match status" value="1"/>
</dbReference>
<dbReference type="PROSITE" id="PS00090">
    <property type="entry name" value="NITROGENASE_1_2"/>
    <property type="match status" value="1"/>
</dbReference>
<feature type="chain" id="PRO_0000153068" description="Nitrogenase molybdenum-iron protein alpha chain">
    <location>
        <begin position="1"/>
        <end position="484"/>
    </location>
</feature>
<feature type="binding site" evidence="1">
    <location>
        <position position="63"/>
    </location>
    <ligand>
        <name>[8Fe-7S] cluster</name>
        <dbReference type="ChEBI" id="CHEBI:21143"/>
        <note>ligand shared with beta chain</note>
    </ligand>
</feature>
<feature type="binding site" evidence="1">
    <location>
        <position position="89"/>
    </location>
    <ligand>
        <name>[8Fe-7S] cluster</name>
        <dbReference type="ChEBI" id="CHEBI:21143"/>
        <note>ligand shared with beta chain</note>
    </ligand>
</feature>
<feature type="binding site" evidence="1">
    <location>
        <position position="155"/>
    </location>
    <ligand>
        <name>[8Fe-7S] cluster</name>
        <dbReference type="ChEBI" id="CHEBI:21143"/>
        <note>ligand shared with beta chain</note>
    </ligand>
</feature>
<feature type="binding site" evidence="1">
    <location>
        <position position="278"/>
    </location>
    <ligand>
        <name>[7Fe-Mo-9S-C-homocitryl] cluster</name>
        <dbReference type="ChEBI" id="CHEBI:30409"/>
    </ligand>
</feature>
<feature type="binding site" evidence="1">
    <location>
        <position position="445"/>
    </location>
    <ligand>
        <name>[7Fe-Mo-9S-C-homocitryl] cluster</name>
        <dbReference type="ChEBI" id="CHEBI:30409"/>
    </ligand>
</feature>
<sequence length="484" mass="54553">MSLTVEETTARNTELINEVLKAYPDKTAKRRAKHLTTQEEGKSDCNVKSNIKSIPGVMTIPPCAYAGSKGVVWGPIKDMIHISHGPVGCGQYSWGSRRNYYIGKTGIDSFVTMQFTSDFQEKDIVFGGDKKLEKIVDEIQELFPLNKGISVQSECPIGLIGDDIEAVSKKKSKQYEGHTIVPVRCEGFRGVSQSLGHHVANDAIKEWVLDKMDPDKNQFVATPYDVAIIGDYNIGGDAWSSRILLEEIGLRVIAQWSGDGTLAEMENTPKAKLNVLHCYRSMNYISRHMEEKFGIPWVEYNFFGPSQIEASLRQIASHFDDKIKEGAERVIAKYKALTDAVIAKYRPRLEGKTVMLFVGGLRPRHVIDAYGDLGMKVVGTGYEFGHNDDYQRTTHYVEDGTLIYDDVTSYEFEKFVEKIEPDLVGSGIKEKYVFQKMGVPFRQMHSWDYSGPYHGYDRFAIFARDMDMAINSPVWGMAKAPWKA</sequence>
<comment type="function">
    <text>This molybdenum-iron protein is part of the nitrogenase complex that catalyzes the key enzymatic reactions in nitrogen fixation.</text>
</comment>
<comment type="catalytic activity">
    <reaction>
        <text>N2 + 8 reduced [2Fe-2S]-[ferredoxin] + 16 ATP + 16 H2O = H2 + 8 oxidized [2Fe-2S]-[ferredoxin] + 2 NH4(+) + 16 ADP + 16 phosphate + 6 H(+)</text>
        <dbReference type="Rhea" id="RHEA:21448"/>
        <dbReference type="Rhea" id="RHEA-COMP:10000"/>
        <dbReference type="Rhea" id="RHEA-COMP:10001"/>
        <dbReference type="ChEBI" id="CHEBI:15377"/>
        <dbReference type="ChEBI" id="CHEBI:15378"/>
        <dbReference type="ChEBI" id="CHEBI:17997"/>
        <dbReference type="ChEBI" id="CHEBI:18276"/>
        <dbReference type="ChEBI" id="CHEBI:28938"/>
        <dbReference type="ChEBI" id="CHEBI:30616"/>
        <dbReference type="ChEBI" id="CHEBI:33737"/>
        <dbReference type="ChEBI" id="CHEBI:33738"/>
        <dbReference type="ChEBI" id="CHEBI:43474"/>
        <dbReference type="ChEBI" id="CHEBI:456216"/>
        <dbReference type="EC" id="1.18.6.1"/>
    </reaction>
</comment>
<comment type="cofactor">
    <cofactor evidence="1">
        <name>[8Fe-7S] cluster</name>
        <dbReference type="ChEBI" id="CHEBI:21143"/>
    </cofactor>
    <text evidence="1">Binds 1 [8Fe-7S] cluster per heterodimer.</text>
</comment>
<comment type="cofactor">
    <cofactor evidence="1">
        <name>[7Fe-Mo-9S-C-homocitryl] cluster</name>
        <dbReference type="ChEBI" id="CHEBI:30409"/>
    </cofactor>
    <text evidence="1">Binds 1 [7Fe-Mo-9S-C-homocitryl] cluster per subunit.</text>
</comment>
<comment type="subunit">
    <text>Tetramer of two alpha and two beta chains. Forms complex with the iron protein (nitrogenase component 2).</text>
</comment>
<comment type="similarity">
    <text evidence="2">Belongs to the NifD/NifK/NifE/NifN family.</text>
</comment>